<keyword id="KW-0326">Glycosidase</keyword>
<keyword id="KW-0378">Hydrolase</keyword>
<keyword id="KW-0574">Periplasm</keyword>
<keyword id="KW-1185">Reference proteome</keyword>
<keyword id="KW-0732">Signal</keyword>
<protein>
    <recommendedName>
        <fullName>Periplasmic beta-glucosidase</fullName>
        <ecNumber>3.2.1.21</ecNumber>
    </recommendedName>
    <alternativeName>
        <fullName>Beta-D-glucoside glucohydrolase</fullName>
    </alternativeName>
    <alternativeName>
        <fullName>Cellobiase</fullName>
    </alternativeName>
    <alternativeName>
        <fullName>Gentiobiase</fullName>
    </alternativeName>
    <alternativeName>
        <fullName>T-cell inhibitor</fullName>
    </alternativeName>
</protein>
<comment type="catalytic activity">
    <reaction>
        <text>Hydrolysis of terminal, non-reducing beta-D-glucosyl residues with release of beta-D-glucose.</text>
        <dbReference type="EC" id="3.2.1.21"/>
    </reaction>
</comment>
<comment type="subcellular location">
    <subcellularLocation>
        <location>Periplasm</location>
    </subcellularLocation>
</comment>
<comment type="similarity">
    <text evidence="3">Belongs to the glycosyl hydrolase 3 family.</text>
</comment>
<gene>
    <name type="primary">bglX</name>
    <name type="ordered locus">STM2166</name>
</gene>
<feature type="signal peptide" evidence="2">
    <location>
        <begin position="1"/>
        <end position="20"/>
    </location>
</feature>
<feature type="chain" id="PRO_0000011782" description="Periplasmic beta-glucosidase">
    <location>
        <begin position="21"/>
        <end position="765"/>
    </location>
</feature>
<feature type="active site" evidence="1">
    <location>
        <position position="287"/>
    </location>
</feature>
<feature type="sequence conflict" description="In Ref. 1; BAA13102." evidence="3" ref="1">
    <original>R</original>
    <variation>L</variation>
    <location>
        <position position="630"/>
    </location>
</feature>
<feature type="sequence conflict" description="In Ref. 1; BAA13102." evidence="3" ref="1">
    <original>EA</original>
    <variation>KP</variation>
    <location>
        <begin position="634"/>
        <end position="635"/>
    </location>
</feature>
<feature type="sequence conflict" description="In Ref. 1; BAA13102." evidence="3" ref="1">
    <original>V</original>
    <variation>F</variation>
    <location>
        <position position="656"/>
    </location>
</feature>
<feature type="sequence conflict" description="In Ref. 1; BAA13102." evidence="3" ref="1">
    <original>E</original>
    <variation>K</variation>
    <location>
        <position position="674"/>
    </location>
</feature>
<feature type="sequence conflict" description="In Ref. 1; BAA13102." evidence="3" ref="1">
    <original>E</original>
    <variation>K</variation>
    <location>
        <position position="717"/>
    </location>
</feature>
<accession>Q56078</accession>
<sequence length="765" mass="83392">MKWLCSVGVAVSLAMQPALAENLFGNHPLTPEARDAFVTDLLKKMTVDEKIGQLRLISVGPDNPKEAIREMIKDGQVGAIFNTVTRQDIRQMQDQVMALSRLKIPLFFAYDVVHGQRTVFPISLGLASSFNLDAVRTVGRVSAYEAADDGLNMTWAPMVDVSRDPRWGRASEGFGEDTYLTSIMGETMVKAMQGKSPADRYSVMTSVKHFAAYGAVEGGKEYNTVDMSSQRLFNDYMPPYKAGLDAGSGAVMVALNSLNGTPATSDSWLLKDVLRDEWGFKGITVSDHGAIKELIKHGTAADPEDAVRVALKAGVDMSMADEYYSKYLPGLIKSGKVTMAELDDATRHVLNVKYDMGLFNDPYSHLGPKESDPVDTNAESRLHRKEAREVARESVVLLKNRLETLPLKKSGTIAVVGPLADSQRDVMGSWSAAGVANQSVTVLAGIQNAVGDGAKILYAKGANITNDKGIVDFLNLYEEAVKIDPRSPQAMIDEAVQAAKQADVVVAVVGESQGMAHEASSRTNITIPQSQRDLITALKATGKPLVLVLMNGRPLALVKEDQQADAILETWFAGTEGGNAIADVLFGDYNPSGKLPISFPRSVGQIPVYYSHLNTGRPYNPEKPNKYTSRYFDEANGPLYPFGYGLSYTTFTVSDVTLSSPTMQRDGKVTASVEVTNTGKREGATVIQMYLQDVTASMSRPVKQLKGFEKITLKPGERKTVSFPIDIEALKFWNQQMKYDAEPGKFNVFIGVDSARVKQGSFELL</sequence>
<evidence type="ECO:0000250" key="1"/>
<evidence type="ECO:0000255" key="2"/>
<evidence type="ECO:0000305" key="3"/>
<name>BGLX_SALTY</name>
<reference key="1">
    <citation type="submission" date="1996-08" db="EMBL/GenBank/DDBJ databases">
        <authorList>
            <person name="Matsui K."/>
        </authorList>
    </citation>
    <scope>NUCLEOTIDE SEQUENCE [GENOMIC DNA]</scope>
    <source>
        <strain>LT2</strain>
    </source>
</reference>
<reference key="2">
    <citation type="journal article" date="2001" name="Nature">
        <title>Complete genome sequence of Salmonella enterica serovar Typhimurium LT2.</title>
        <authorList>
            <person name="McClelland M."/>
            <person name="Sanderson K.E."/>
            <person name="Spieth J."/>
            <person name="Clifton S.W."/>
            <person name="Latreille P."/>
            <person name="Courtney L."/>
            <person name="Porwollik S."/>
            <person name="Ali J."/>
            <person name="Dante M."/>
            <person name="Du F."/>
            <person name="Hou S."/>
            <person name="Layman D."/>
            <person name="Leonard S."/>
            <person name="Nguyen C."/>
            <person name="Scott K."/>
            <person name="Holmes A."/>
            <person name="Grewal N."/>
            <person name="Mulvaney E."/>
            <person name="Ryan E."/>
            <person name="Sun H."/>
            <person name="Florea L."/>
            <person name="Miller W."/>
            <person name="Stoneking T."/>
            <person name="Nhan M."/>
            <person name="Waterston R."/>
            <person name="Wilson R.K."/>
        </authorList>
    </citation>
    <scope>NUCLEOTIDE SEQUENCE [LARGE SCALE GENOMIC DNA]</scope>
    <source>
        <strain>LT2 / SGSC1412 / ATCC 700720</strain>
    </source>
</reference>
<dbReference type="EC" id="3.2.1.21"/>
<dbReference type="EMBL" id="D86507">
    <property type="protein sequence ID" value="BAA13102.1"/>
    <property type="molecule type" value="Genomic_DNA"/>
</dbReference>
<dbReference type="EMBL" id="AE006468">
    <property type="protein sequence ID" value="AAL21070.1"/>
    <property type="molecule type" value="Genomic_DNA"/>
</dbReference>
<dbReference type="RefSeq" id="NP_461111.1">
    <property type="nucleotide sequence ID" value="NC_003197.2"/>
</dbReference>
<dbReference type="RefSeq" id="WP_000871560.1">
    <property type="nucleotide sequence ID" value="NC_003197.2"/>
</dbReference>
<dbReference type="SMR" id="Q56078"/>
<dbReference type="STRING" id="99287.STM2166"/>
<dbReference type="CAZy" id="GH3">
    <property type="family name" value="Glycoside Hydrolase Family 3"/>
</dbReference>
<dbReference type="PaxDb" id="99287-STM2166"/>
<dbReference type="GeneID" id="1253688"/>
<dbReference type="KEGG" id="stm:STM2166"/>
<dbReference type="PATRIC" id="fig|99287.12.peg.2292"/>
<dbReference type="HOGENOM" id="CLU_004542_5_1_6"/>
<dbReference type="OMA" id="MSAYHSY"/>
<dbReference type="PhylomeDB" id="Q56078"/>
<dbReference type="BioCyc" id="SENT99287:STM2166-MONOMER"/>
<dbReference type="Proteomes" id="UP000001014">
    <property type="component" value="Chromosome"/>
</dbReference>
<dbReference type="GO" id="GO:0042597">
    <property type="term" value="C:periplasmic space"/>
    <property type="evidence" value="ECO:0007669"/>
    <property type="project" value="UniProtKB-SubCell"/>
</dbReference>
<dbReference type="GO" id="GO:0008422">
    <property type="term" value="F:beta-glucosidase activity"/>
    <property type="evidence" value="ECO:0000318"/>
    <property type="project" value="GO_Central"/>
</dbReference>
<dbReference type="GO" id="GO:0009251">
    <property type="term" value="P:glucan catabolic process"/>
    <property type="evidence" value="ECO:0000318"/>
    <property type="project" value="GO_Central"/>
</dbReference>
<dbReference type="FunFam" id="2.60.40.10:FF:000495">
    <property type="entry name" value="Periplasmic beta-glucosidase"/>
    <property type="match status" value="1"/>
</dbReference>
<dbReference type="FunFam" id="3.20.20.300:FF:000005">
    <property type="entry name" value="Periplasmic beta-glucosidase"/>
    <property type="match status" value="1"/>
</dbReference>
<dbReference type="FunFam" id="3.40.50.1700:FF:000004">
    <property type="entry name" value="Periplasmic beta-glucosidase"/>
    <property type="match status" value="1"/>
</dbReference>
<dbReference type="Gene3D" id="3.40.50.1700">
    <property type="entry name" value="Glycoside hydrolase family 3 C-terminal domain"/>
    <property type="match status" value="1"/>
</dbReference>
<dbReference type="Gene3D" id="3.20.20.300">
    <property type="entry name" value="Glycoside hydrolase, family 3, N-terminal domain"/>
    <property type="match status" value="1"/>
</dbReference>
<dbReference type="Gene3D" id="2.60.40.10">
    <property type="entry name" value="Immunoglobulins"/>
    <property type="match status" value="1"/>
</dbReference>
<dbReference type="InterPro" id="IPR051915">
    <property type="entry name" value="Cellulose_Degrad_GH3"/>
</dbReference>
<dbReference type="InterPro" id="IPR026891">
    <property type="entry name" value="Fn3-like"/>
</dbReference>
<dbReference type="InterPro" id="IPR019800">
    <property type="entry name" value="Glyco_hydro_3_AS"/>
</dbReference>
<dbReference type="InterPro" id="IPR002772">
    <property type="entry name" value="Glyco_hydro_3_C"/>
</dbReference>
<dbReference type="InterPro" id="IPR036881">
    <property type="entry name" value="Glyco_hydro_3_C_sf"/>
</dbReference>
<dbReference type="InterPro" id="IPR001764">
    <property type="entry name" value="Glyco_hydro_3_N"/>
</dbReference>
<dbReference type="InterPro" id="IPR036962">
    <property type="entry name" value="Glyco_hydro_3_N_sf"/>
</dbReference>
<dbReference type="InterPro" id="IPR017853">
    <property type="entry name" value="Glycoside_hydrolase_SF"/>
</dbReference>
<dbReference type="InterPro" id="IPR013783">
    <property type="entry name" value="Ig-like_fold"/>
</dbReference>
<dbReference type="NCBIfam" id="NF011678">
    <property type="entry name" value="PRK15098.1"/>
    <property type="match status" value="1"/>
</dbReference>
<dbReference type="PANTHER" id="PTHR30620:SF16">
    <property type="entry name" value="LYSOSOMAL BETA GLUCOSIDASE"/>
    <property type="match status" value="1"/>
</dbReference>
<dbReference type="PANTHER" id="PTHR30620">
    <property type="entry name" value="PERIPLASMIC BETA-GLUCOSIDASE-RELATED"/>
    <property type="match status" value="1"/>
</dbReference>
<dbReference type="Pfam" id="PF14310">
    <property type="entry name" value="Fn3-like"/>
    <property type="match status" value="1"/>
</dbReference>
<dbReference type="Pfam" id="PF00933">
    <property type="entry name" value="Glyco_hydro_3"/>
    <property type="match status" value="1"/>
</dbReference>
<dbReference type="Pfam" id="PF01915">
    <property type="entry name" value="Glyco_hydro_3_C"/>
    <property type="match status" value="1"/>
</dbReference>
<dbReference type="PRINTS" id="PR00133">
    <property type="entry name" value="GLHYDRLASE3"/>
</dbReference>
<dbReference type="SMART" id="SM01217">
    <property type="entry name" value="Fn3_like"/>
    <property type="match status" value="1"/>
</dbReference>
<dbReference type="SUPFAM" id="SSF51445">
    <property type="entry name" value="(Trans)glycosidases"/>
    <property type="match status" value="1"/>
</dbReference>
<dbReference type="SUPFAM" id="SSF52279">
    <property type="entry name" value="Beta-D-glucan exohydrolase, C-terminal domain"/>
    <property type="match status" value="1"/>
</dbReference>
<dbReference type="PROSITE" id="PS00775">
    <property type="entry name" value="GLYCOSYL_HYDROL_F3"/>
    <property type="match status" value="1"/>
</dbReference>
<proteinExistence type="inferred from homology"/>
<organism>
    <name type="scientific">Salmonella typhimurium (strain LT2 / SGSC1412 / ATCC 700720)</name>
    <dbReference type="NCBI Taxonomy" id="99287"/>
    <lineage>
        <taxon>Bacteria</taxon>
        <taxon>Pseudomonadati</taxon>
        <taxon>Pseudomonadota</taxon>
        <taxon>Gammaproteobacteria</taxon>
        <taxon>Enterobacterales</taxon>
        <taxon>Enterobacteriaceae</taxon>
        <taxon>Salmonella</taxon>
    </lineage>
</organism>